<name>SSRP_RHOP5</name>
<gene>
    <name evidence="1" type="primary">smpB</name>
    <name type="ordered locus">RPE_3030</name>
</gene>
<organism>
    <name type="scientific">Rhodopseudomonas palustris (strain BisA53)</name>
    <dbReference type="NCBI Taxonomy" id="316055"/>
    <lineage>
        <taxon>Bacteria</taxon>
        <taxon>Pseudomonadati</taxon>
        <taxon>Pseudomonadota</taxon>
        <taxon>Alphaproteobacteria</taxon>
        <taxon>Hyphomicrobiales</taxon>
        <taxon>Nitrobacteraceae</taxon>
        <taxon>Rhodopseudomonas</taxon>
    </lineage>
</organism>
<comment type="function">
    <text evidence="1">Required for rescue of stalled ribosomes mediated by trans-translation. Binds to transfer-messenger RNA (tmRNA), required for stable association of tmRNA with ribosomes. tmRNA and SmpB together mimic tRNA shape, replacing the anticodon stem-loop with SmpB. tmRNA is encoded by the ssrA gene; the 2 termini fold to resemble tRNA(Ala) and it encodes a 'tag peptide', a short internal open reading frame. During trans-translation Ala-aminoacylated tmRNA acts like a tRNA, entering the A-site of stalled ribosomes, displacing the stalled mRNA. The ribosome then switches to translate the ORF on the tmRNA; the nascent peptide is terminated with the 'tag peptide' encoded by the tmRNA and targeted for degradation. The ribosome is freed to recommence translation, which seems to be the essential function of trans-translation.</text>
</comment>
<comment type="subcellular location">
    <subcellularLocation>
        <location evidence="1">Cytoplasm</location>
    </subcellularLocation>
    <text evidence="1">The tmRNA-SmpB complex associates with stalled 70S ribosomes.</text>
</comment>
<comment type="similarity">
    <text evidence="1">Belongs to the SmpB family.</text>
</comment>
<proteinExistence type="inferred from homology"/>
<sequence length="157" mass="18037">MAEKNERPIKVVAENRKARFNYAIEDTVEAGIALTGTEVKSVRNGKTTIAESYADSRGGEIWLINANIPEYLQANRFNHEPKRPRKLLLHRKQINKLMGAVERQGMTLIPLKLYFNEKGRAKLLLALAKGKQLHDKRETEKKRDWSKEKGRLMRAKG</sequence>
<keyword id="KW-0963">Cytoplasm</keyword>
<keyword id="KW-0694">RNA-binding</keyword>
<reference key="1">
    <citation type="submission" date="2006-09" db="EMBL/GenBank/DDBJ databases">
        <title>Complete sequence of Rhodopseudomonas palustris BisA53.</title>
        <authorList>
            <consortium name="US DOE Joint Genome Institute"/>
            <person name="Copeland A."/>
            <person name="Lucas S."/>
            <person name="Lapidus A."/>
            <person name="Barry K."/>
            <person name="Detter J.C."/>
            <person name="Glavina del Rio T."/>
            <person name="Hammon N."/>
            <person name="Israni S."/>
            <person name="Dalin E."/>
            <person name="Tice H."/>
            <person name="Pitluck S."/>
            <person name="Chain P."/>
            <person name="Malfatti S."/>
            <person name="Shin M."/>
            <person name="Vergez L."/>
            <person name="Schmutz J."/>
            <person name="Larimer F."/>
            <person name="Land M."/>
            <person name="Hauser L."/>
            <person name="Pelletier D.A."/>
            <person name="Kyrpides N."/>
            <person name="Kim E."/>
            <person name="Harwood C.S."/>
            <person name="Oda Y."/>
            <person name="Richardson P."/>
        </authorList>
    </citation>
    <scope>NUCLEOTIDE SEQUENCE [LARGE SCALE GENOMIC DNA]</scope>
    <source>
        <strain>BisA53</strain>
    </source>
</reference>
<protein>
    <recommendedName>
        <fullName evidence="1">SsrA-binding protein</fullName>
    </recommendedName>
    <alternativeName>
        <fullName evidence="1">Small protein B</fullName>
    </alternativeName>
</protein>
<dbReference type="EMBL" id="CP000463">
    <property type="protein sequence ID" value="ABJ06967.1"/>
    <property type="molecule type" value="Genomic_DNA"/>
</dbReference>
<dbReference type="SMR" id="Q07M67"/>
<dbReference type="STRING" id="316055.RPE_3030"/>
<dbReference type="KEGG" id="rpe:RPE_3030"/>
<dbReference type="eggNOG" id="COG0691">
    <property type="taxonomic scope" value="Bacteria"/>
</dbReference>
<dbReference type="HOGENOM" id="CLU_108953_0_1_5"/>
<dbReference type="OrthoDB" id="9805462at2"/>
<dbReference type="GO" id="GO:0005829">
    <property type="term" value="C:cytosol"/>
    <property type="evidence" value="ECO:0007669"/>
    <property type="project" value="TreeGrafter"/>
</dbReference>
<dbReference type="GO" id="GO:0003723">
    <property type="term" value="F:RNA binding"/>
    <property type="evidence" value="ECO:0007669"/>
    <property type="project" value="UniProtKB-UniRule"/>
</dbReference>
<dbReference type="GO" id="GO:0070929">
    <property type="term" value="P:trans-translation"/>
    <property type="evidence" value="ECO:0007669"/>
    <property type="project" value="UniProtKB-UniRule"/>
</dbReference>
<dbReference type="CDD" id="cd09294">
    <property type="entry name" value="SmpB"/>
    <property type="match status" value="1"/>
</dbReference>
<dbReference type="Gene3D" id="2.40.280.10">
    <property type="match status" value="1"/>
</dbReference>
<dbReference type="HAMAP" id="MF_00023">
    <property type="entry name" value="SmpB"/>
    <property type="match status" value="1"/>
</dbReference>
<dbReference type="InterPro" id="IPR023620">
    <property type="entry name" value="SmpB"/>
</dbReference>
<dbReference type="InterPro" id="IPR000037">
    <property type="entry name" value="SsrA-bd_prot"/>
</dbReference>
<dbReference type="InterPro" id="IPR020081">
    <property type="entry name" value="SsrA-bd_prot_CS"/>
</dbReference>
<dbReference type="NCBIfam" id="NF003843">
    <property type="entry name" value="PRK05422.1"/>
    <property type="match status" value="1"/>
</dbReference>
<dbReference type="NCBIfam" id="TIGR00086">
    <property type="entry name" value="smpB"/>
    <property type="match status" value="1"/>
</dbReference>
<dbReference type="PANTHER" id="PTHR30308:SF2">
    <property type="entry name" value="SSRA-BINDING PROTEIN"/>
    <property type="match status" value="1"/>
</dbReference>
<dbReference type="PANTHER" id="PTHR30308">
    <property type="entry name" value="TMRNA-BINDING COMPONENT OF TRANS-TRANSLATION TAGGING COMPLEX"/>
    <property type="match status" value="1"/>
</dbReference>
<dbReference type="Pfam" id="PF01668">
    <property type="entry name" value="SmpB"/>
    <property type="match status" value="1"/>
</dbReference>
<dbReference type="SUPFAM" id="SSF74982">
    <property type="entry name" value="Small protein B (SmpB)"/>
    <property type="match status" value="1"/>
</dbReference>
<dbReference type="PROSITE" id="PS01317">
    <property type="entry name" value="SSRP"/>
    <property type="match status" value="1"/>
</dbReference>
<feature type="chain" id="PRO_1000002126" description="SsrA-binding protein">
    <location>
        <begin position="1"/>
        <end position="157"/>
    </location>
</feature>
<feature type="region of interest" description="Disordered" evidence="2">
    <location>
        <begin position="134"/>
        <end position="157"/>
    </location>
</feature>
<feature type="compositionally biased region" description="Basic and acidic residues" evidence="2">
    <location>
        <begin position="134"/>
        <end position="151"/>
    </location>
</feature>
<accession>Q07M67</accession>
<evidence type="ECO:0000255" key="1">
    <source>
        <dbReference type="HAMAP-Rule" id="MF_00023"/>
    </source>
</evidence>
<evidence type="ECO:0000256" key="2">
    <source>
        <dbReference type="SAM" id="MobiDB-lite"/>
    </source>
</evidence>